<accession>Q03TH5</accession>
<comment type="function">
    <text evidence="1">H(+)-stimulated, divalent metal cation uptake system.</text>
</comment>
<comment type="subcellular location">
    <subcellularLocation>
        <location evidence="1">Cell membrane</location>
        <topology evidence="1">Multi-pass membrane protein</topology>
    </subcellularLocation>
</comment>
<comment type="similarity">
    <text evidence="1">Belongs to the NRAMP family.</text>
</comment>
<name>MNTH_LEVBA</name>
<protein>
    <recommendedName>
        <fullName evidence="1">Divalent metal cation transporter MntH</fullName>
    </recommendedName>
</protein>
<proteinExistence type="inferred from homology"/>
<organism>
    <name type="scientific">Levilactobacillus brevis (strain ATCC 367 / BCRC 12310 / CIP 105137 / JCM 1170 / LMG 11437 / NCIMB 947 / NCTC 947)</name>
    <name type="common">Lactobacillus brevis</name>
    <dbReference type="NCBI Taxonomy" id="387344"/>
    <lineage>
        <taxon>Bacteria</taxon>
        <taxon>Bacillati</taxon>
        <taxon>Bacillota</taxon>
        <taxon>Bacilli</taxon>
        <taxon>Lactobacillales</taxon>
        <taxon>Lactobacillaceae</taxon>
        <taxon>Levilactobacillus</taxon>
    </lineage>
</organism>
<evidence type="ECO:0000255" key="1">
    <source>
        <dbReference type="HAMAP-Rule" id="MF_00221"/>
    </source>
</evidence>
<evidence type="ECO:0000256" key="2">
    <source>
        <dbReference type="SAM" id="MobiDB-lite"/>
    </source>
</evidence>
<dbReference type="EMBL" id="CP000416">
    <property type="protein sequence ID" value="ABJ63497.1"/>
    <property type="molecule type" value="Genomic_DNA"/>
</dbReference>
<dbReference type="RefSeq" id="WP_011667125.1">
    <property type="nucleotide sequence ID" value="NC_008497.1"/>
</dbReference>
<dbReference type="SMR" id="Q03TH5"/>
<dbReference type="STRING" id="387344.LVIS_0331"/>
<dbReference type="KEGG" id="lbr:LVIS_0331"/>
<dbReference type="eggNOG" id="COG1914">
    <property type="taxonomic scope" value="Bacteria"/>
</dbReference>
<dbReference type="HOGENOM" id="CLU_020088_2_0_9"/>
<dbReference type="Proteomes" id="UP000001652">
    <property type="component" value="Chromosome"/>
</dbReference>
<dbReference type="GO" id="GO:0005886">
    <property type="term" value="C:plasma membrane"/>
    <property type="evidence" value="ECO:0007669"/>
    <property type="project" value="UniProtKB-SubCell"/>
</dbReference>
<dbReference type="GO" id="GO:0015086">
    <property type="term" value="F:cadmium ion transmembrane transporter activity"/>
    <property type="evidence" value="ECO:0007669"/>
    <property type="project" value="TreeGrafter"/>
</dbReference>
<dbReference type="GO" id="GO:0005384">
    <property type="term" value="F:manganese ion transmembrane transporter activity"/>
    <property type="evidence" value="ECO:0007669"/>
    <property type="project" value="TreeGrafter"/>
</dbReference>
<dbReference type="GO" id="GO:0046872">
    <property type="term" value="F:metal ion binding"/>
    <property type="evidence" value="ECO:0007669"/>
    <property type="project" value="UniProtKB-UniRule"/>
</dbReference>
<dbReference type="GO" id="GO:0015293">
    <property type="term" value="F:symporter activity"/>
    <property type="evidence" value="ECO:0007669"/>
    <property type="project" value="UniProtKB-UniRule"/>
</dbReference>
<dbReference type="GO" id="GO:0034755">
    <property type="term" value="P:iron ion transmembrane transport"/>
    <property type="evidence" value="ECO:0007669"/>
    <property type="project" value="TreeGrafter"/>
</dbReference>
<dbReference type="HAMAP" id="MF_00221">
    <property type="entry name" value="NRAMP"/>
    <property type="match status" value="1"/>
</dbReference>
<dbReference type="InterPro" id="IPR001046">
    <property type="entry name" value="NRAMP_fam"/>
</dbReference>
<dbReference type="NCBIfam" id="TIGR01197">
    <property type="entry name" value="nramp"/>
    <property type="match status" value="1"/>
</dbReference>
<dbReference type="NCBIfam" id="NF037982">
    <property type="entry name" value="Nramp_1"/>
    <property type="match status" value="1"/>
</dbReference>
<dbReference type="NCBIfam" id="NF001923">
    <property type="entry name" value="PRK00701.1"/>
    <property type="match status" value="1"/>
</dbReference>
<dbReference type="PANTHER" id="PTHR11706:SF33">
    <property type="entry name" value="NATURAL RESISTANCE-ASSOCIATED MACROPHAGE PROTEIN 2"/>
    <property type="match status" value="1"/>
</dbReference>
<dbReference type="PANTHER" id="PTHR11706">
    <property type="entry name" value="SOLUTE CARRIER PROTEIN FAMILY 11 MEMBER"/>
    <property type="match status" value="1"/>
</dbReference>
<dbReference type="Pfam" id="PF01566">
    <property type="entry name" value="Nramp"/>
    <property type="match status" value="1"/>
</dbReference>
<dbReference type="PRINTS" id="PR00447">
    <property type="entry name" value="NATRESASSCMP"/>
</dbReference>
<gene>
    <name evidence="1" type="primary">mntH</name>
    <name type="ordered locus">LVIS_0331</name>
</gene>
<sequence length="459" mass="49889">MKNHETDTKTKHHMIESTGSGQKSLDEVNGTVEVPQNAGFWRTLMAYTGPGALIAVGYMDPGNWITSIAGGAQYKYTLLTVVLLSSLVAMLLQAMSARLGIVTGKDLAQLTREHTGKRTGFALWIITELAIMATDIAEIIGSAIALKLLFGFPLIVGIIITAMDVLVLLVLMKLGFRKIEAIVATLVAVILFVFLYEVILAQPHMGEVLKGYLPSSTVVTNHGMLYLSLGIVGATVMPHDLYLGSSISQTRSFDRKNRKSVAQAIKFTTIDSNIQLTLAFVVNSLLLILGAALFFGTNSDLGRFVDLFNALSDSQIVGAIASPMLSMLFALALLSSGQSSTITGTLAGQIIMEGFINLKMPLWAQRLITRLLSVTPVIIFAIIYHGNEAKIEDLLTFSQVFLSIALPFAMIPLVIFTSSKKLMGEFANRTWSKILGWIIAVILIILNIYLILNTLHIVQ</sequence>
<keyword id="KW-1003">Cell membrane</keyword>
<keyword id="KW-0406">Ion transport</keyword>
<keyword id="KW-0472">Membrane</keyword>
<keyword id="KW-1185">Reference proteome</keyword>
<keyword id="KW-0769">Symport</keyword>
<keyword id="KW-0812">Transmembrane</keyword>
<keyword id="KW-1133">Transmembrane helix</keyword>
<keyword id="KW-0813">Transport</keyword>
<feature type="chain" id="PRO_0000325605" description="Divalent metal cation transporter MntH">
    <location>
        <begin position="1"/>
        <end position="459"/>
    </location>
</feature>
<feature type="transmembrane region" description="Helical" evidence="1">
    <location>
        <begin position="38"/>
        <end position="60"/>
    </location>
</feature>
<feature type="transmembrane region" description="Helical" evidence="1">
    <location>
        <begin position="77"/>
        <end position="97"/>
    </location>
</feature>
<feature type="transmembrane region" description="Helical" evidence="1">
    <location>
        <begin position="120"/>
        <end position="140"/>
    </location>
</feature>
<feature type="transmembrane region" description="Helical" evidence="1">
    <location>
        <begin position="152"/>
        <end position="172"/>
    </location>
</feature>
<feature type="transmembrane region" description="Helical" evidence="1">
    <location>
        <begin position="181"/>
        <end position="201"/>
    </location>
</feature>
<feature type="transmembrane region" description="Helical" evidence="1">
    <location>
        <begin position="223"/>
        <end position="243"/>
    </location>
</feature>
<feature type="transmembrane region" description="Helical" evidence="1">
    <location>
        <begin position="276"/>
        <end position="296"/>
    </location>
</feature>
<feature type="transmembrane region" description="Helical" evidence="1">
    <location>
        <begin position="316"/>
        <end position="336"/>
    </location>
</feature>
<feature type="transmembrane region" description="Helical" evidence="1">
    <location>
        <begin position="367"/>
        <end position="387"/>
    </location>
</feature>
<feature type="transmembrane region" description="Helical" evidence="1">
    <location>
        <begin position="396"/>
        <end position="416"/>
    </location>
</feature>
<feature type="transmembrane region" description="Helical" evidence="1">
    <location>
        <begin position="434"/>
        <end position="454"/>
    </location>
</feature>
<feature type="region of interest" description="Disordered" evidence="2">
    <location>
        <begin position="1"/>
        <end position="27"/>
    </location>
</feature>
<feature type="compositionally biased region" description="Basic and acidic residues" evidence="2">
    <location>
        <begin position="1"/>
        <end position="15"/>
    </location>
</feature>
<reference key="1">
    <citation type="journal article" date="2006" name="Proc. Natl. Acad. Sci. U.S.A.">
        <title>Comparative genomics of the lactic acid bacteria.</title>
        <authorList>
            <person name="Makarova K.S."/>
            <person name="Slesarev A."/>
            <person name="Wolf Y.I."/>
            <person name="Sorokin A."/>
            <person name="Mirkin B."/>
            <person name="Koonin E.V."/>
            <person name="Pavlov A."/>
            <person name="Pavlova N."/>
            <person name="Karamychev V."/>
            <person name="Polouchine N."/>
            <person name="Shakhova V."/>
            <person name="Grigoriev I."/>
            <person name="Lou Y."/>
            <person name="Rohksar D."/>
            <person name="Lucas S."/>
            <person name="Huang K."/>
            <person name="Goodstein D.M."/>
            <person name="Hawkins T."/>
            <person name="Plengvidhya V."/>
            <person name="Welker D."/>
            <person name="Hughes J."/>
            <person name="Goh Y."/>
            <person name="Benson A."/>
            <person name="Baldwin K."/>
            <person name="Lee J.-H."/>
            <person name="Diaz-Muniz I."/>
            <person name="Dosti B."/>
            <person name="Smeianov V."/>
            <person name="Wechter W."/>
            <person name="Barabote R."/>
            <person name="Lorca G."/>
            <person name="Altermann E."/>
            <person name="Barrangou R."/>
            <person name="Ganesan B."/>
            <person name="Xie Y."/>
            <person name="Rawsthorne H."/>
            <person name="Tamir D."/>
            <person name="Parker C."/>
            <person name="Breidt F."/>
            <person name="Broadbent J.R."/>
            <person name="Hutkins R."/>
            <person name="O'Sullivan D."/>
            <person name="Steele J."/>
            <person name="Unlu G."/>
            <person name="Saier M.H. Jr."/>
            <person name="Klaenhammer T."/>
            <person name="Richardson P."/>
            <person name="Kozyavkin S."/>
            <person name="Weimer B.C."/>
            <person name="Mills D.A."/>
        </authorList>
    </citation>
    <scope>NUCLEOTIDE SEQUENCE [LARGE SCALE GENOMIC DNA]</scope>
    <source>
        <strain>ATCC 367 / BCRC 12310 / CIP 105137 / JCM 1170 / LMG 11437 / NCIMB 947 / NCTC 947</strain>
    </source>
</reference>